<accession>P28213</accession>
<proteinExistence type="evidence at transcript level"/>
<comment type="catalytic activity">
    <reaction evidence="3">
        <text>O-phospho-L-tyrosyl-[protein] + H2O = L-tyrosyl-[protein] + phosphate</text>
        <dbReference type="Rhea" id="RHEA:10684"/>
        <dbReference type="Rhea" id="RHEA-COMP:10136"/>
        <dbReference type="Rhea" id="RHEA-COMP:20101"/>
        <dbReference type="ChEBI" id="CHEBI:15377"/>
        <dbReference type="ChEBI" id="CHEBI:43474"/>
        <dbReference type="ChEBI" id="CHEBI:46858"/>
        <dbReference type="ChEBI" id="CHEBI:61978"/>
        <dbReference type="EC" id="3.1.3.48"/>
    </reaction>
</comment>
<comment type="similarity">
    <text evidence="4">Belongs to the protein-tyrosine phosphatase family.</text>
</comment>
<reference key="1">
    <citation type="journal article" date="1991" name="Immunogenetics">
        <title>Protein tyrosine phosphatase domains from the protochordate Styela plicata.</title>
        <authorList>
            <person name="Matthews R.J."/>
            <person name="Flores E."/>
            <person name="Thomas M.L."/>
        </authorList>
    </citation>
    <scope>NUCLEOTIDE SEQUENCE [MRNA]</scope>
</reference>
<name>PTP21_STYPL</name>
<organism>
    <name type="scientific">Styela plicata</name>
    <name type="common">Wrinkled sea squirt</name>
    <name type="synonym">Ascidia plicata</name>
    <dbReference type="NCBI Taxonomy" id="7726"/>
    <lineage>
        <taxon>Eukaryota</taxon>
        <taxon>Metazoa</taxon>
        <taxon>Chordata</taxon>
        <taxon>Tunicata</taxon>
        <taxon>Ascidiacea</taxon>
        <taxon>Stolidobranchia</taxon>
        <taxon>Styelidae</taxon>
        <taxon>Styela</taxon>
    </lineage>
</organism>
<evidence type="ECO:0000250" key="1"/>
<evidence type="ECO:0000255" key="2">
    <source>
        <dbReference type="PROSITE-ProRule" id="PRU00160"/>
    </source>
</evidence>
<evidence type="ECO:0000255" key="3">
    <source>
        <dbReference type="PROSITE-ProRule" id="PRU10044"/>
    </source>
</evidence>
<evidence type="ECO:0000305" key="4"/>
<feature type="chain" id="PRO_0000094909" description="Tyrosine-protein phosphatase 21">
    <location>
        <begin position="1" status="less than"/>
        <end position="115" status="greater than"/>
    </location>
</feature>
<feature type="domain" description="Tyrosine-protein phosphatase" evidence="2">
    <location>
        <begin position="1" status="less than"/>
        <end position="115" status="greater than"/>
    </location>
</feature>
<feature type="binding site" evidence="1">
    <location>
        <position position="83"/>
    </location>
    <ligand>
        <name>substrate</name>
    </ligand>
</feature>
<feature type="non-terminal residue">
    <location>
        <position position="1"/>
    </location>
</feature>
<feature type="non-terminal residue">
    <location>
        <position position="115"/>
    </location>
</feature>
<gene>
    <name type="primary">STY-21</name>
</gene>
<keyword id="KW-0378">Hydrolase</keyword>
<keyword id="KW-0904">Protein phosphatase</keyword>
<sequence>WLMIVEKECRVIVMLAKCYEAGKKKCQKYWPDSKDTLTFGQIKVFNAEEVRYSGFLVRKFQIESVEKMITMEVFQYQYTNWPDHSVPYTTSNLVRMHKNVIQLLAEIGGDAPMVV</sequence>
<protein>
    <recommendedName>
        <fullName>Tyrosine-protein phosphatase 21</fullName>
        <ecNumber>3.1.3.48</ecNumber>
    </recommendedName>
</protein>
<dbReference type="EC" id="3.1.3.48"/>
<dbReference type="EMBL" id="M38006">
    <property type="protein sequence ID" value="AAA29839.1"/>
    <property type="molecule type" value="mRNA"/>
</dbReference>
<dbReference type="SMR" id="P28213"/>
<dbReference type="GO" id="GO:0004725">
    <property type="term" value="F:protein tyrosine phosphatase activity"/>
    <property type="evidence" value="ECO:0007669"/>
    <property type="project" value="UniProtKB-EC"/>
</dbReference>
<dbReference type="CDD" id="cd00047">
    <property type="entry name" value="PTPc"/>
    <property type="match status" value="1"/>
</dbReference>
<dbReference type="Gene3D" id="3.90.190.10">
    <property type="entry name" value="Protein tyrosine phosphatase superfamily"/>
    <property type="match status" value="1"/>
</dbReference>
<dbReference type="InterPro" id="IPR029021">
    <property type="entry name" value="Prot-tyrosine_phosphatase-like"/>
</dbReference>
<dbReference type="InterPro" id="IPR050348">
    <property type="entry name" value="Protein-Tyr_Phosphatase"/>
</dbReference>
<dbReference type="InterPro" id="IPR000242">
    <property type="entry name" value="PTP_cat"/>
</dbReference>
<dbReference type="PANTHER" id="PTHR19134:SF562">
    <property type="entry name" value="PROTEIN-TYROSINE-PHOSPHATASE"/>
    <property type="match status" value="1"/>
</dbReference>
<dbReference type="PANTHER" id="PTHR19134">
    <property type="entry name" value="RECEPTOR-TYPE TYROSINE-PROTEIN PHOSPHATASE"/>
    <property type="match status" value="1"/>
</dbReference>
<dbReference type="Pfam" id="PF00102">
    <property type="entry name" value="Y_phosphatase"/>
    <property type="match status" value="1"/>
</dbReference>
<dbReference type="SUPFAM" id="SSF52799">
    <property type="entry name" value="(Phosphotyrosine protein) phosphatases II"/>
    <property type="match status" value="1"/>
</dbReference>
<dbReference type="PROSITE" id="PS50055">
    <property type="entry name" value="TYR_PHOSPHATASE_PTP"/>
    <property type="match status" value="1"/>
</dbReference>